<accession>P48821</accession>
<proteinExistence type="inferred from homology"/>
<sequence>MNFTRIIFFLFVVVFATASGKPWNIFKEIERAVARTRDAVISAGPAVRTVAAATSVASG</sequence>
<keyword id="KW-0027">Amidation</keyword>
<keyword id="KW-0044">Antibiotic</keyword>
<keyword id="KW-0929">Antimicrobial</keyword>
<keyword id="KW-0391">Immunity</keyword>
<keyword id="KW-0399">Innate immunity</keyword>
<keyword id="KW-1185">Reference proteome</keyword>
<keyword id="KW-0964">Secreted</keyword>
<keyword id="KW-0732">Signal</keyword>
<comment type="function">
    <text>Has antibacterial activity against Gram-positive and Gram-negative bacteria.</text>
</comment>
<comment type="subcellular location">
    <subcellularLocation>
        <location>Secreted</location>
    </subcellularLocation>
</comment>
<comment type="similarity">
    <text evidence="2">Belongs to the cecropin family.</text>
</comment>
<feature type="signal peptide" evidence="1">
    <location>
        <begin position="1"/>
        <end position="20"/>
    </location>
</feature>
<feature type="propeptide" id="PRO_0000004830" evidence="1">
    <location>
        <position position="21"/>
    </location>
</feature>
<feature type="chain" id="PRO_0000004831" description="Antibacterial peptide enbocin">
    <location>
        <begin position="22"/>
        <end position="58"/>
    </location>
</feature>
<feature type="modified residue" description="Serine amide" evidence="1">
    <location>
        <position position="58"/>
    </location>
</feature>
<organism>
    <name type="scientific">Bombyx mori</name>
    <name type="common">Silk moth</name>
    <dbReference type="NCBI Taxonomy" id="7091"/>
    <lineage>
        <taxon>Eukaryota</taxon>
        <taxon>Metazoa</taxon>
        <taxon>Ecdysozoa</taxon>
        <taxon>Arthropoda</taxon>
        <taxon>Hexapoda</taxon>
        <taxon>Insecta</taxon>
        <taxon>Pterygota</taxon>
        <taxon>Neoptera</taxon>
        <taxon>Endopterygota</taxon>
        <taxon>Lepidoptera</taxon>
        <taxon>Glossata</taxon>
        <taxon>Ditrysia</taxon>
        <taxon>Bombycoidea</taxon>
        <taxon>Bombycidae</taxon>
        <taxon>Bombycinae</taxon>
        <taxon>Bombyx</taxon>
    </lineage>
</organism>
<evidence type="ECO:0000255" key="1"/>
<evidence type="ECO:0000305" key="2"/>
<dbReference type="EMBL" id="U30289">
    <property type="protein sequence ID" value="AAC02238.1"/>
    <property type="molecule type" value="mRNA"/>
</dbReference>
<dbReference type="EMBL" id="AF049237">
    <property type="protein sequence ID" value="AAC05493.1"/>
    <property type="molecule type" value="Genomic_DNA"/>
</dbReference>
<dbReference type="PIR" id="JE0161">
    <property type="entry name" value="JE0161"/>
</dbReference>
<dbReference type="RefSeq" id="NP_001037472.1">
    <property type="nucleotide sequence ID" value="NM_001044007.1"/>
</dbReference>
<dbReference type="SMR" id="P48821"/>
<dbReference type="STRING" id="7091.P48821"/>
<dbReference type="TCDB" id="1.C.17.1.3">
    <property type="family name" value="the cecropin (cecropin) family"/>
</dbReference>
<dbReference type="PaxDb" id="7091-BGIBMGA000018-TA"/>
<dbReference type="GeneID" id="693035"/>
<dbReference type="CTD" id="693035"/>
<dbReference type="HOGENOM" id="CLU_187909_0_0_1"/>
<dbReference type="InParanoid" id="P48821"/>
<dbReference type="Proteomes" id="UP000005204">
    <property type="component" value="Unassembled WGS sequence"/>
</dbReference>
<dbReference type="GO" id="GO:0005576">
    <property type="term" value="C:extracellular region"/>
    <property type="evidence" value="ECO:0007669"/>
    <property type="project" value="UniProtKB-SubCell"/>
</dbReference>
<dbReference type="GO" id="GO:0019731">
    <property type="term" value="P:antibacterial humoral response"/>
    <property type="evidence" value="ECO:0007669"/>
    <property type="project" value="InterPro"/>
</dbReference>
<dbReference type="GO" id="GO:0050830">
    <property type="term" value="P:defense response to Gram-positive bacterium"/>
    <property type="evidence" value="ECO:0007669"/>
    <property type="project" value="UniProtKB-ARBA"/>
</dbReference>
<dbReference type="GO" id="GO:0045087">
    <property type="term" value="P:innate immune response"/>
    <property type="evidence" value="ECO:0007669"/>
    <property type="project" value="UniProtKB-KW"/>
</dbReference>
<dbReference type="InterPro" id="IPR000875">
    <property type="entry name" value="Cecropin"/>
</dbReference>
<dbReference type="Pfam" id="PF00272">
    <property type="entry name" value="Cecropin"/>
    <property type="match status" value="1"/>
</dbReference>
<dbReference type="PROSITE" id="PS00268">
    <property type="entry name" value="CECROPIN"/>
    <property type="match status" value="1"/>
</dbReference>
<protein>
    <recommendedName>
        <fullName>Antibacterial peptide enbocin</fullName>
    </recommendedName>
    <alternativeName>
        <fullName>Moricin</fullName>
    </alternativeName>
</protein>
<reference key="1">
    <citation type="submission" date="1995-06" db="EMBL/GenBank/DDBJ databases">
        <title>Molecular characterization of a new antibacterial peptide gene, enbocin, from Bombyx mori.</title>
        <authorList>
            <person name="Kim S.H."/>
            <person name="Je Y.H."/>
            <person name="Kim K.Y."/>
            <person name="Kang S.K."/>
        </authorList>
    </citation>
    <scope>NUCLEOTIDE SEQUENCE [MRNA]</scope>
</reference>
<reference key="2">
    <citation type="submission" date="1998-02" db="EMBL/GenBank/DDBJ databases">
        <title>Cloning and expression of enbocin gene encoding a new antibacterial peptide from Bombyx mori.</title>
        <authorList>
            <person name="Kim S.H."/>
            <person name="Je Y.H."/>
            <person name="Youn E.Y."/>
            <person name="Lee D.W."/>
            <person name="Kim K.Y."/>
            <person name="Kang S.K."/>
        </authorList>
    </citation>
    <scope>NUCLEOTIDE SEQUENCE [GENOMIC DNA]</scope>
    <source>
        <strain>Backokjam</strain>
    </source>
</reference>
<name>CECE_BOMMO</name>